<feature type="signal peptide" evidence="4">
    <location>
        <begin position="1"/>
        <end position="25"/>
    </location>
</feature>
<feature type="chain" id="PRO_0000347280" description="Alpha-1-antitrypsin 1-6" evidence="4">
    <location>
        <begin position="26"/>
        <end position="411"/>
    </location>
</feature>
<feature type="site" description="Reactive bond" evidence="1">
    <location>
        <begin position="376"/>
        <end position="377"/>
    </location>
</feature>
<feature type="glycosylation site" description="N-linked (GlcNAc...) asparagine" evidence="4">
    <location>
        <position position="50"/>
    </location>
</feature>
<feature type="glycosylation site" description="N-linked (GlcNAc...) asparagine" evidence="4">
    <location>
        <position position="89"/>
    </location>
</feature>
<feature type="glycosylation site" description="N-linked (GlcNAc...) asparagine" evidence="4">
    <location>
        <position position="101"/>
    </location>
</feature>
<feature type="glycosylation site" description="N-linked (GlcNAc...) asparagine" evidence="4">
    <location>
        <position position="164"/>
    </location>
</feature>
<feature type="splice variant" id="VSP_052895" description="In isoform 2." evidence="7">
    <location>
        <begin position="210"/>
        <end position="264"/>
    </location>
</feature>
<feature type="sequence conflict" description="In Ref. 1; BAE45638 and 2; BAE38167." evidence="9" ref="1 2">
    <original>T</original>
    <variation>P</variation>
    <location>
        <position position="127"/>
    </location>
</feature>
<feature type="sequence conflict" description="In Ref. 1; BAE45638 and 2; BAE38167." evidence="9" ref="1 2">
    <original>E</original>
    <variation>D</variation>
    <location>
        <position position="154"/>
    </location>
</feature>
<feature type="sequence conflict" description="In Ref. 1; BAE45638 and 2; BAE38167." evidence="9" ref="1 2">
    <original>I</original>
    <variation>K</variation>
    <location>
        <position position="182"/>
    </location>
</feature>
<feature type="sequence conflict" description="In Ref. 2; BAE38167." evidence="9" ref="2">
    <original>A</original>
    <variation>E</variation>
    <location>
        <position position="186"/>
    </location>
</feature>
<feature type="sequence conflict" description="In Ref. 1; BAE45638." evidence="9" ref="1">
    <original>A</original>
    <variation>G</variation>
    <location>
        <position position="186"/>
    </location>
</feature>
<feature type="sequence conflict" description="In Ref. 1; BAE45638." evidence="9" ref="1">
    <original>G</original>
    <variation>E</variation>
    <location>
        <position position="251"/>
    </location>
</feature>
<feature type="sequence conflict" description="In Ref. 2; BAE38167." evidence="9" ref="2">
    <original>K</original>
    <variation>R</variation>
    <location>
        <position position="281"/>
    </location>
</feature>
<feature type="sequence conflict" description="In Ref. 1; BAE45638." evidence="9" ref="1">
    <original>I</original>
    <variation>T</variation>
    <location>
        <position position="307"/>
    </location>
</feature>
<feature type="sequence conflict" description="In Ref. 1; BAE45638." evidence="9" ref="1">
    <original>N</original>
    <variation>D</variation>
    <location>
        <position position="385"/>
    </location>
</feature>
<accession>Q9DCQ7</accession>
<accession>Q3LFT1</accession>
<accession>Q3TNC2</accession>
<name>A1AT6_MOUSE</name>
<protein>
    <recommendedName>
        <fullName evidence="2">Alpha-1-antitrypsin 1-6</fullName>
    </recommendedName>
    <alternativeName>
        <fullName evidence="2">Alpha-1 protease inhibitor 6</fullName>
    </alternativeName>
    <alternativeName>
        <fullName evidence="2">Alpha-1-antiproteinase</fullName>
    </alternativeName>
    <alternativeName>
        <fullName>Serine protease inhibitor 1-6</fullName>
    </alternativeName>
    <alternativeName>
        <fullName evidence="8">Serine protease inhibitor A1f</fullName>
        <shortName>Serpin A1f</shortName>
    </alternativeName>
</protein>
<proteinExistence type="evidence at transcript level"/>
<comment type="function">
    <text evidence="3">Inhibitor of serine proteases.</text>
</comment>
<comment type="subcellular location">
    <subcellularLocation>
        <location evidence="3">Secreted</location>
    </subcellularLocation>
</comment>
<comment type="alternative products">
    <event type="alternative splicing"/>
    <isoform>
        <id>Q9DCQ7-1</id>
        <name evidence="5">1</name>
        <sequence type="displayed"/>
    </isoform>
    <isoform>
        <id>Q9DCQ7-2</id>
        <name evidence="5">2</name>
        <sequence type="described" ref="VSP_052895"/>
    </isoform>
</comment>
<comment type="tissue specificity">
    <text evidence="6">Expressed predominantly in epididymis where it is found in the epithelial cells of the caput, corpus and cauda epididymis.</text>
</comment>
<comment type="developmental stage">
    <text evidence="6">Expression increases gradually from post-natal day 1 to week 2, increases significantly from week 2 to week 4 and remains high thereafter.</text>
</comment>
<comment type="induction">
    <text evidence="6">Expression decreases following castration. Administration of testosterone restores expression levels.</text>
</comment>
<comment type="domain">
    <text evidence="2 3">The reactive center loop (RCL) extends out from the body of the protein and directs binding to the target protease. The protease cleaves the serpin at the reactive site within the RCL, establishing a covalent linkage between the carboxyl group of the serpin reactive site and the serine hydroxyl of the protease. The resulting inactive serpin-protease complex is highly stable. Variability within the reactive center loop (RCL) sequences of Serpina1-related genes may determine target protease specificity (By similarity).</text>
</comment>
<comment type="miscellaneous">
    <text evidence="9">Murine alpha-1-antitrypsin is represented by a cluster of up to 6 individual Serpina1-related genes. The precise complement of Serpina1-related genes present varies according to the strain of the animal.</text>
</comment>
<comment type="similarity">
    <text evidence="4">Belongs to the serpin family.</text>
</comment>
<organism>
    <name type="scientific">Mus musculus</name>
    <name type="common">Mouse</name>
    <dbReference type="NCBI Taxonomy" id="10090"/>
    <lineage>
        <taxon>Eukaryota</taxon>
        <taxon>Metazoa</taxon>
        <taxon>Chordata</taxon>
        <taxon>Craniata</taxon>
        <taxon>Vertebrata</taxon>
        <taxon>Euteleostomi</taxon>
        <taxon>Mammalia</taxon>
        <taxon>Eutheria</taxon>
        <taxon>Euarchontoglires</taxon>
        <taxon>Glires</taxon>
        <taxon>Rodentia</taxon>
        <taxon>Myomorpha</taxon>
        <taxon>Muroidea</taxon>
        <taxon>Muridae</taxon>
        <taxon>Murinae</taxon>
        <taxon>Mus</taxon>
        <taxon>Mus</taxon>
    </lineage>
</organism>
<dbReference type="EMBL" id="AB233454">
    <property type="protein sequence ID" value="BAE45638.1"/>
    <property type="molecule type" value="mRNA"/>
</dbReference>
<dbReference type="EMBL" id="AK002574">
    <property type="protein sequence ID" value="BAB22199.1"/>
    <property type="molecule type" value="mRNA"/>
</dbReference>
<dbReference type="EMBL" id="AK165409">
    <property type="protein sequence ID" value="BAE38167.1"/>
    <property type="molecule type" value="mRNA"/>
</dbReference>
<dbReference type="CCDS" id="CCDS26137.1">
    <molecule id="Q9DCQ7-1"/>
</dbReference>
<dbReference type="CCDS" id="CCDS49155.1">
    <molecule id="Q9DCQ7-2"/>
</dbReference>
<dbReference type="RefSeq" id="NP_001158214.1">
    <property type="nucleotide sequence ID" value="NM_001164742.1"/>
</dbReference>
<dbReference type="RefSeq" id="NP_080963.2">
    <property type="nucleotide sequence ID" value="NM_026687.2"/>
</dbReference>
<dbReference type="SMR" id="Q9DCQ7"/>
<dbReference type="BioGRID" id="212815">
    <property type="interactions" value="1"/>
</dbReference>
<dbReference type="FunCoup" id="Q9DCQ7">
    <property type="interactions" value="12"/>
</dbReference>
<dbReference type="IntAct" id="Q9DCQ7">
    <property type="interactions" value="1"/>
</dbReference>
<dbReference type="MINT" id="Q9DCQ7"/>
<dbReference type="STRING" id="10090.ENSMUSP00000021490"/>
<dbReference type="MEROPS" id="I04.968"/>
<dbReference type="GlyCosmos" id="Q9DCQ7">
    <property type="glycosylation" value="4 sites, No reported glycans"/>
</dbReference>
<dbReference type="GlyGen" id="Q9DCQ7">
    <property type="glycosylation" value="4 sites"/>
</dbReference>
<dbReference type="PhosphoSitePlus" id="Q9DCQ7"/>
<dbReference type="PaxDb" id="10090-ENSMUSP00000021490"/>
<dbReference type="ProteomicsDB" id="285741">
    <molecule id="Q9DCQ7-1"/>
</dbReference>
<dbReference type="ProteomicsDB" id="285742">
    <molecule id="Q9DCQ7-2"/>
</dbReference>
<dbReference type="DNASU" id="68348"/>
<dbReference type="GeneID" id="68348"/>
<dbReference type="KEGG" id="mmu:68348"/>
<dbReference type="AGR" id="MGI:1915598"/>
<dbReference type="CTD" id="68348"/>
<dbReference type="MGI" id="MGI:1915598">
    <property type="gene designation" value="Serpina1f"/>
</dbReference>
<dbReference type="eggNOG" id="KOG2392">
    <property type="taxonomic scope" value="Eukaryota"/>
</dbReference>
<dbReference type="InParanoid" id="Q9DCQ7"/>
<dbReference type="OrthoDB" id="9613715at2759"/>
<dbReference type="PhylomeDB" id="Q9DCQ7"/>
<dbReference type="BioGRID-ORCS" id="68348">
    <property type="hits" value="3 hits in 79 CRISPR screens"/>
</dbReference>
<dbReference type="PRO" id="PR:Q9DCQ7"/>
<dbReference type="Proteomes" id="UP000000589">
    <property type="component" value="Unplaced"/>
</dbReference>
<dbReference type="RNAct" id="Q9DCQ7">
    <property type="molecule type" value="protein"/>
</dbReference>
<dbReference type="GO" id="GO:0005615">
    <property type="term" value="C:extracellular space"/>
    <property type="evidence" value="ECO:0007669"/>
    <property type="project" value="InterPro"/>
</dbReference>
<dbReference type="GO" id="GO:0004867">
    <property type="term" value="F:serine-type endopeptidase inhibitor activity"/>
    <property type="evidence" value="ECO:0007669"/>
    <property type="project" value="UniProtKB-KW"/>
</dbReference>
<dbReference type="FunFam" id="3.30.497.10:FF:000001">
    <property type="entry name" value="Serine protease inhibitor"/>
    <property type="match status" value="1"/>
</dbReference>
<dbReference type="Gene3D" id="2.30.39.10">
    <property type="entry name" value="Alpha-1-antitrypsin, domain 1"/>
    <property type="match status" value="1"/>
</dbReference>
<dbReference type="Gene3D" id="3.30.497.10">
    <property type="entry name" value="Antithrombin, subunit I, domain 2"/>
    <property type="match status" value="1"/>
</dbReference>
<dbReference type="InterPro" id="IPR023795">
    <property type="entry name" value="Serpin_CS"/>
</dbReference>
<dbReference type="InterPro" id="IPR023796">
    <property type="entry name" value="Serpin_dom"/>
</dbReference>
<dbReference type="InterPro" id="IPR000215">
    <property type="entry name" value="Serpin_fam"/>
</dbReference>
<dbReference type="InterPro" id="IPR036186">
    <property type="entry name" value="Serpin_sf"/>
</dbReference>
<dbReference type="InterPro" id="IPR042178">
    <property type="entry name" value="Serpin_sf_1"/>
</dbReference>
<dbReference type="InterPro" id="IPR042185">
    <property type="entry name" value="Serpin_sf_2"/>
</dbReference>
<dbReference type="PANTHER" id="PTHR11461:SF32">
    <property type="entry name" value="ALPHA-1-ANTITRYPSIN 1-6"/>
    <property type="match status" value="1"/>
</dbReference>
<dbReference type="PANTHER" id="PTHR11461">
    <property type="entry name" value="SERINE PROTEASE INHIBITOR, SERPIN"/>
    <property type="match status" value="1"/>
</dbReference>
<dbReference type="Pfam" id="PF00079">
    <property type="entry name" value="Serpin"/>
    <property type="match status" value="1"/>
</dbReference>
<dbReference type="SMART" id="SM00093">
    <property type="entry name" value="SERPIN"/>
    <property type="match status" value="1"/>
</dbReference>
<dbReference type="SUPFAM" id="SSF56574">
    <property type="entry name" value="Serpins"/>
    <property type="match status" value="1"/>
</dbReference>
<dbReference type="PROSITE" id="PS00284">
    <property type="entry name" value="SERPIN"/>
    <property type="match status" value="1"/>
</dbReference>
<gene>
    <name evidence="12" type="primary">Serpina1f</name>
</gene>
<keyword id="KW-0025">Alternative splicing</keyword>
<keyword id="KW-0325">Glycoprotein</keyword>
<keyword id="KW-0646">Protease inhibitor</keyword>
<keyword id="KW-1185">Reference proteome</keyword>
<keyword id="KW-0964">Secreted</keyword>
<keyword id="KW-0722">Serine protease inhibitor</keyword>
<keyword id="KW-0732">Signal</keyword>
<evidence type="ECO:0000250" key="1"/>
<evidence type="ECO:0000250" key="2">
    <source>
        <dbReference type="UniProtKB" id="P01009"/>
    </source>
</evidence>
<evidence type="ECO:0000250" key="3">
    <source>
        <dbReference type="UniProtKB" id="P07758"/>
    </source>
</evidence>
<evidence type="ECO:0000255" key="4"/>
<evidence type="ECO:0000269" key="5">
    <source>
    </source>
</evidence>
<evidence type="ECO:0000269" key="6">
    <source>
    </source>
</evidence>
<evidence type="ECO:0000303" key="7">
    <source>
    </source>
</evidence>
<evidence type="ECO:0000303" key="8">
    <source>
    </source>
</evidence>
<evidence type="ECO:0000305" key="9"/>
<evidence type="ECO:0000312" key="10">
    <source>
        <dbReference type="EMBL" id="BAB22199.1"/>
    </source>
</evidence>
<evidence type="ECO:0000312" key="11">
    <source>
        <dbReference type="EMBL" id="BAE45638.1"/>
    </source>
</evidence>
<evidence type="ECO:0000312" key="12">
    <source>
        <dbReference type="MGI" id="MGI:1915598"/>
    </source>
</evidence>
<reference evidence="9 11" key="1">
    <citation type="journal article" date="2006" name="Biol. Reprod.">
        <title>Identification and characterization of novel and unknown mouse epididymis-specific genes by complementary DNA microarray technology.</title>
        <authorList>
            <person name="Yamazaki K."/>
            <person name="Adachi T."/>
            <person name="Sato K."/>
            <person name="Yanagisawa Y."/>
            <person name="Fukata H."/>
            <person name="Seki N."/>
            <person name="Mori C."/>
            <person name="Komiyama M."/>
        </authorList>
    </citation>
    <scope>NUCLEOTIDE SEQUENCE [MRNA] (ISOFORM 1)</scope>
    <scope>TISSUE SPECIFICITY</scope>
    <scope>DEVELOPMENTAL STAGE</scope>
    <scope>INDUCTION</scope>
    <source>
        <tissue evidence="11">Epididymis</tissue>
    </source>
</reference>
<reference evidence="9 10" key="2">
    <citation type="journal article" date="2005" name="Science">
        <title>The transcriptional landscape of the mammalian genome.</title>
        <authorList>
            <person name="Carninci P."/>
            <person name="Kasukawa T."/>
            <person name="Katayama S."/>
            <person name="Gough J."/>
            <person name="Frith M.C."/>
            <person name="Maeda N."/>
            <person name="Oyama R."/>
            <person name="Ravasi T."/>
            <person name="Lenhard B."/>
            <person name="Wells C."/>
            <person name="Kodzius R."/>
            <person name="Shimokawa K."/>
            <person name="Bajic V.B."/>
            <person name="Brenner S.E."/>
            <person name="Batalov S."/>
            <person name="Forrest A.R."/>
            <person name="Zavolan M."/>
            <person name="Davis M.J."/>
            <person name="Wilming L.G."/>
            <person name="Aidinis V."/>
            <person name="Allen J.E."/>
            <person name="Ambesi-Impiombato A."/>
            <person name="Apweiler R."/>
            <person name="Aturaliya R.N."/>
            <person name="Bailey T.L."/>
            <person name="Bansal M."/>
            <person name="Baxter L."/>
            <person name="Beisel K.W."/>
            <person name="Bersano T."/>
            <person name="Bono H."/>
            <person name="Chalk A.M."/>
            <person name="Chiu K.P."/>
            <person name="Choudhary V."/>
            <person name="Christoffels A."/>
            <person name="Clutterbuck D.R."/>
            <person name="Crowe M.L."/>
            <person name="Dalla E."/>
            <person name="Dalrymple B.P."/>
            <person name="de Bono B."/>
            <person name="Della Gatta G."/>
            <person name="di Bernardo D."/>
            <person name="Down T."/>
            <person name="Engstrom P."/>
            <person name="Fagiolini M."/>
            <person name="Faulkner G."/>
            <person name="Fletcher C.F."/>
            <person name="Fukushima T."/>
            <person name="Furuno M."/>
            <person name="Futaki S."/>
            <person name="Gariboldi M."/>
            <person name="Georgii-Hemming P."/>
            <person name="Gingeras T.R."/>
            <person name="Gojobori T."/>
            <person name="Green R.E."/>
            <person name="Gustincich S."/>
            <person name="Harbers M."/>
            <person name="Hayashi Y."/>
            <person name="Hensch T.K."/>
            <person name="Hirokawa N."/>
            <person name="Hill D."/>
            <person name="Huminiecki L."/>
            <person name="Iacono M."/>
            <person name="Ikeo K."/>
            <person name="Iwama A."/>
            <person name="Ishikawa T."/>
            <person name="Jakt M."/>
            <person name="Kanapin A."/>
            <person name="Katoh M."/>
            <person name="Kawasawa Y."/>
            <person name="Kelso J."/>
            <person name="Kitamura H."/>
            <person name="Kitano H."/>
            <person name="Kollias G."/>
            <person name="Krishnan S.P."/>
            <person name="Kruger A."/>
            <person name="Kummerfeld S.K."/>
            <person name="Kurochkin I.V."/>
            <person name="Lareau L.F."/>
            <person name="Lazarevic D."/>
            <person name="Lipovich L."/>
            <person name="Liu J."/>
            <person name="Liuni S."/>
            <person name="McWilliam S."/>
            <person name="Madan Babu M."/>
            <person name="Madera M."/>
            <person name="Marchionni L."/>
            <person name="Matsuda H."/>
            <person name="Matsuzawa S."/>
            <person name="Miki H."/>
            <person name="Mignone F."/>
            <person name="Miyake S."/>
            <person name="Morris K."/>
            <person name="Mottagui-Tabar S."/>
            <person name="Mulder N."/>
            <person name="Nakano N."/>
            <person name="Nakauchi H."/>
            <person name="Ng P."/>
            <person name="Nilsson R."/>
            <person name="Nishiguchi S."/>
            <person name="Nishikawa S."/>
            <person name="Nori F."/>
            <person name="Ohara O."/>
            <person name="Okazaki Y."/>
            <person name="Orlando V."/>
            <person name="Pang K.C."/>
            <person name="Pavan W.J."/>
            <person name="Pavesi G."/>
            <person name="Pesole G."/>
            <person name="Petrovsky N."/>
            <person name="Piazza S."/>
            <person name="Reed J."/>
            <person name="Reid J.F."/>
            <person name="Ring B.Z."/>
            <person name="Ringwald M."/>
            <person name="Rost B."/>
            <person name="Ruan Y."/>
            <person name="Salzberg S.L."/>
            <person name="Sandelin A."/>
            <person name="Schneider C."/>
            <person name="Schoenbach C."/>
            <person name="Sekiguchi K."/>
            <person name="Semple C.A."/>
            <person name="Seno S."/>
            <person name="Sessa L."/>
            <person name="Sheng Y."/>
            <person name="Shibata Y."/>
            <person name="Shimada H."/>
            <person name="Shimada K."/>
            <person name="Silva D."/>
            <person name="Sinclair B."/>
            <person name="Sperling S."/>
            <person name="Stupka E."/>
            <person name="Sugiura K."/>
            <person name="Sultana R."/>
            <person name="Takenaka Y."/>
            <person name="Taki K."/>
            <person name="Tammoja K."/>
            <person name="Tan S.L."/>
            <person name="Tang S."/>
            <person name="Taylor M.S."/>
            <person name="Tegner J."/>
            <person name="Teichmann S.A."/>
            <person name="Ueda H.R."/>
            <person name="van Nimwegen E."/>
            <person name="Verardo R."/>
            <person name="Wei C.L."/>
            <person name="Yagi K."/>
            <person name="Yamanishi H."/>
            <person name="Zabarovsky E."/>
            <person name="Zhu S."/>
            <person name="Zimmer A."/>
            <person name="Hide W."/>
            <person name="Bult C."/>
            <person name="Grimmond S.M."/>
            <person name="Teasdale R.D."/>
            <person name="Liu E.T."/>
            <person name="Brusic V."/>
            <person name="Quackenbush J."/>
            <person name="Wahlestedt C."/>
            <person name="Mattick J.S."/>
            <person name="Hume D.A."/>
            <person name="Kai C."/>
            <person name="Sasaki D."/>
            <person name="Tomaru Y."/>
            <person name="Fukuda S."/>
            <person name="Kanamori-Katayama M."/>
            <person name="Suzuki M."/>
            <person name="Aoki J."/>
            <person name="Arakawa T."/>
            <person name="Iida J."/>
            <person name="Imamura K."/>
            <person name="Itoh M."/>
            <person name="Kato T."/>
            <person name="Kawaji H."/>
            <person name="Kawagashira N."/>
            <person name="Kawashima T."/>
            <person name="Kojima M."/>
            <person name="Kondo S."/>
            <person name="Konno H."/>
            <person name="Nakano K."/>
            <person name="Ninomiya N."/>
            <person name="Nishio T."/>
            <person name="Okada M."/>
            <person name="Plessy C."/>
            <person name="Shibata K."/>
            <person name="Shiraki T."/>
            <person name="Suzuki S."/>
            <person name="Tagami M."/>
            <person name="Waki K."/>
            <person name="Watahiki A."/>
            <person name="Okamura-Oho Y."/>
            <person name="Suzuki H."/>
            <person name="Kawai J."/>
            <person name="Hayashizaki Y."/>
        </authorList>
    </citation>
    <scope>NUCLEOTIDE SEQUENCE [LARGE SCALE MRNA] (ISOFORMS 1 AND 2)</scope>
    <source>
        <strain evidence="10">C57BL/6J</strain>
        <tissue evidence="10">Kidney</tissue>
    </source>
</reference>
<sequence>MTTPFSSHGLLLLVGLCCLLLITKTKHEKLYEDPSIDPFQCRKVALTICNVSITLFKKMAQLSGNGNILFSPIRVIAAISMLSLGSNGNLSKHILETLRFNKTGLPEAEIHKCFWYLLHSIHQTEETSSLQTGSSVFIHQDLTSVDKFVKGVKELYHSDMISINFTDSSQAKTQINNYVMEISQKAIVNIVKNLESDTFLAVVNYIIWNAKLDSNFGCRSVKVKDYHLGYGMTIKVPMIHNMAMHYLFRVGDLSSTVLMLTLLTGNFATYFIIPDPGKMQKVEQSLTYPHFRRMRRQLLTRLVDLEIPELSLSETHDLESMMSLLGITYVFNSGTNSSDMNDTLQKSFKVVSKAVLTIDEKGSKPSTNSCFKKLGSTDMGRMQLNRPFLIFIQDHTNDVPLFLGRVVNPQN</sequence>